<keyword id="KW-1185">Reference proteome</keyword>
<proteinExistence type="predicted"/>
<name>YL285_YEAST</name>
<sequence length="56" mass="7163">MFLRFYNRLLYIYNELFNFLRFTVFLPFCEFVPHHDLFYLIVTYQRTLVYKHKNDC</sequence>
<protein>
    <recommendedName>
        <fullName>Uncharacterized protein YLR285C-A</fullName>
    </recommendedName>
</protein>
<accession>Q3E771</accession>
<accession>D6VYT0</accession>
<feature type="chain" id="PRO_0000247137" description="Uncharacterized protein YLR285C-A">
    <location>
        <begin position="1"/>
        <end position="56"/>
    </location>
</feature>
<reference key="1">
    <citation type="journal article" date="1997" name="Nature">
        <title>The nucleotide sequence of Saccharomyces cerevisiae chromosome XII.</title>
        <authorList>
            <person name="Johnston M."/>
            <person name="Hillier L.W."/>
            <person name="Riles L."/>
            <person name="Albermann K."/>
            <person name="Andre B."/>
            <person name="Ansorge W."/>
            <person name="Benes V."/>
            <person name="Brueckner M."/>
            <person name="Delius H."/>
            <person name="Dubois E."/>
            <person name="Duesterhoeft A."/>
            <person name="Entian K.-D."/>
            <person name="Floeth M."/>
            <person name="Goffeau A."/>
            <person name="Hebling U."/>
            <person name="Heumann K."/>
            <person name="Heuss-Neitzel D."/>
            <person name="Hilbert H."/>
            <person name="Hilger F."/>
            <person name="Kleine K."/>
            <person name="Koetter P."/>
            <person name="Louis E.J."/>
            <person name="Messenguy F."/>
            <person name="Mewes H.-W."/>
            <person name="Miosga T."/>
            <person name="Moestl D."/>
            <person name="Mueller-Auer S."/>
            <person name="Nentwich U."/>
            <person name="Obermaier B."/>
            <person name="Piravandi E."/>
            <person name="Pohl T.M."/>
            <person name="Portetelle D."/>
            <person name="Purnelle B."/>
            <person name="Rechmann S."/>
            <person name="Rieger M."/>
            <person name="Rinke M."/>
            <person name="Rose M."/>
            <person name="Scharfe M."/>
            <person name="Scherens B."/>
            <person name="Scholler P."/>
            <person name="Schwager C."/>
            <person name="Schwarz S."/>
            <person name="Underwood A.P."/>
            <person name="Urrestarazu L.A."/>
            <person name="Vandenbol M."/>
            <person name="Verhasselt P."/>
            <person name="Vierendeels F."/>
            <person name="Voet M."/>
            <person name="Volckaert G."/>
            <person name="Voss H."/>
            <person name="Wambutt R."/>
            <person name="Wedler E."/>
            <person name="Wedler H."/>
            <person name="Zimmermann F.K."/>
            <person name="Zollner A."/>
            <person name="Hani J."/>
            <person name="Hoheisel J.D."/>
        </authorList>
    </citation>
    <scope>NUCLEOTIDE SEQUENCE [LARGE SCALE GENOMIC DNA]</scope>
    <source>
        <strain>ATCC 204508 / S288c</strain>
    </source>
</reference>
<reference key="2">
    <citation type="journal article" date="2014" name="G3 (Bethesda)">
        <title>The reference genome sequence of Saccharomyces cerevisiae: Then and now.</title>
        <authorList>
            <person name="Engel S.R."/>
            <person name="Dietrich F.S."/>
            <person name="Fisk D.G."/>
            <person name="Binkley G."/>
            <person name="Balakrishnan R."/>
            <person name="Costanzo M.C."/>
            <person name="Dwight S.S."/>
            <person name="Hitz B.C."/>
            <person name="Karra K."/>
            <person name="Nash R.S."/>
            <person name="Weng S."/>
            <person name="Wong E.D."/>
            <person name="Lloyd P."/>
            <person name="Skrzypek M.S."/>
            <person name="Miyasato S.R."/>
            <person name="Simison M."/>
            <person name="Cherry J.M."/>
        </authorList>
    </citation>
    <scope>GENOME REANNOTATION</scope>
    <source>
        <strain>ATCC 204508 / S288c</strain>
    </source>
</reference>
<reference key="3">
    <citation type="journal article" date="2003" name="Genome Res.">
        <title>Systematic discovery of new genes in the Saccharomyces cerevisiae genome.</title>
        <authorList>
            <person name="Kessler M.M."/>
            <person name="Zeng Q."/>
            <person name="Hogan S."/>
            <person name="Cook R."/>
            <person name="Morales A.J."/>
            <person name="Cottarel G."/>
        </authorList>
    </citation>
    <scope>GENOME REANNOTATION</scope>
</reference>
<dbReference type="EMBL" id="U17243">
    <property type="status" value="NOT_ANNOTATED_CDS"/>
    <property type="molecule type" value="Genomic_DNA"/>
</dbReference>
<dbReference type="EMBL" id="BK006945">
    <property type="protein sequence ID" value="DAA09596.1"/>
    <property type="molecule type" value="Genomic_DNA"/>
</dbReference>
<dbReference type="RefSeq" id="NP_878130.1">
    <property type="nucleotide sequence ID" value="NM_001184567.1"/>
</dbReference>
<dbReference type="SMR" id="Q3E771"/>
<dbReference type="BioGRID" id="36960">
    <property type="interactions" value="46"/>
</dbReference>
<dbReference type="FunCoup" id="Q3E771">
    <property type="interactions" value="25"/>
</dbReference>
<dbReference type="STRING" id="4932.YLR285C-A"/>
<dbReference type="PaxDb" id="4932-YLR285C-A"/>
<dbReference type="EnsemblFungi" id="YLR285C-A_mRNA">
    <property type="protein sequence ID" value="YLR285C-A"/>
    <property type="gene ID" value="YLR285C-A"/>
</dbReference>
<dbReference type="GeneID" id="1466418"/>
<dbReference type="KEGG" id="sce:YLR285C-A"/>
<dbReference type="AGR" id="SGD:S000028569"/>
<dbReference type="SGD" id="S000028569">
    <property type="gene designation" value="YLR285C-A"/>
</dbReference>
<dbReference type="VEuPathDB" id="FungiDB:YLR285C-A"/>
<dbReference type="HOGENOM" id="CLU_204131_0_0_1"/>
<dbReference type="InParanoid" id="Q3E771"/>
<dbReference type="OrthoDB" id="10270553at2759"/>
<dbReference type="BioCyc" id="YEAST:G3O-32581-MONOMER"/>
<dbReference type="BioGRID-ORCS" id="1466418">
    <property type="hits" value="3 hits in 10 CRISPR screens"/>
</dbReference>
<dbReference type="PRO" id="PR:Q3E771"/>
<dbReference type="Proteomes" id="UP000002311">
    <property type="component" value="Chromosome XII"/>
</dbReference>
<dbReference type="RNAct" id="Q3E771">
    <property type="molecule type" value="protein"/>
</dbReference>
<organism>
    <name type="scientific">Saccharomyces cerevisiae (strain ATCC 204508 / S288c)</name>
    <name type="common">Baker's yeast</name>
    <dbReference type="NCBI Taxonomy" id="559292"/>
    <lineage>
        <taxon>Eukaryota</taxon>
        <taxon>Fungi</taxon>
        <taxon>Dikarya</taxon>
        <taxon>Ascomycota</taxon>
        <taxon>Saccharomycotina</taxon>
        <taxon>Saccharomycetes</taxon>
        <taxon>Saccharomycetales</taxon>
        <taxon>Saccharomycetaceae</taxon>
        <taxon>Saccharomyces</taxon>
    </lineage>
</organism>
<gene>
    <name type="ordered locus">YLR285C-A</name>
</gene>